<dbReference type="EMBL" id="AE001363">
    <property type="protein sequence ID" value="AAD19126.1"/>
    <property type="molecule type" value="Genomic_DNA"/>
</dbReference>
<dbReference type="EMBL" id="AE002161">
    <property type="protein sequence ID" value="AAF38655.1"/>
    <property type="status" value="ALT_INIT"/>
    <property type="molecule type" value="Genomic_DNA"/>
</dbReference>
<dbReference type="EMBL" id="BA000008">
    <property type="protein sequence ID" value="BAA99196.1"/>
    <property type="molecule type" value="Genomic_DNA"/>
</dbReference>
<dbReference type="EMBL" id="AE009440">
    <property type="protein sequence ID" value="AAP98955.1"/>
    <property type="status" value="ALT_INIT"/>
    <property type="molecule type" value="Genomic_DNA"/>
</dbReference>
<dbReference type="PIR" id="B81530">
    <property type="entry name" value="B81530"/>
</dbReference>
<dbReference type="PIR" id="B86614">
    <property type="entry name" value="B86614"/>
</dbReference>
<dbReference type="PIR" id="F72010">
    <property type="entry name" value="F72010"/>
</dbReference>
<dbReference type="RefSeq" id="NP_225183.1">
    <property type="nucleotide sequence ID" value="NC_000922.1"/>
</dbReference>
<dbReference type="RefSeq" id="WP_010883622.1">
    <property type="nucleotide sequence ID" value="NZ_LN847257.1"/>
</dbReference>
<dbReference type="SMR" id="Q9Z6S0"/>
<dbReference type="STRING" id="406984.CPK_ORF00414"/>
<dbReference type="GeneID" id="45051045"/>
<dbReference type="KEGG" id="cpa:CP_0866"/>
<dbReference type="KEGG" id="cpj:CPj0989"/>
<dbReference type="KEGG" id="cpn:CPn_0989"/>
<dbReference type="KEGG" id="cpt:CpB1026"/>
<dbReference type="PATRIC" id="fig|115713.3.peg.1084"/>
<dbReference type="eggNOG" id="COG0781">
    <property type="taxonomic scope" value="Bacteria"/>
</dbReference>
<dbReference type="HOGENOM" id="CLU_087843_3_3_0"/>
<dbReference type="OrthoDB" id="9811381at2"/>
<dbReference type="Proteomes" id="UP000000583">
    <property type="component" value="Chromosome"/>
</dbReference>
<dbReference type="Proteomes" id="UP000000801">
    <property type="component" value="Chromosome"/>
</dbReference>
<dbReference type="GO" id="GO:0003723">
    <property type="term" value="F:RNA binding"/>
    <property type="evidence" value="ECO:0007669"/>
    <property type="project" value="UniProtKB-UniRule"/>
</dbReference>
<dbReference type="GO" id="GO:0006353">
    <property type="term" value="P:DNA-templated transcription termination"/>
    <property type="evidence" value="ECO:0007669"/>
    <property type="project" value="UniProtKB-UniRule"/>
</dbReference>
<dbReference type="GO" id="GO:0031564">
    <property type="term" value="P:transcription antitermination"/>
    <property type="evidence" value="ECO:0007669"/>
    <property type="project" value="UniProtKB-KW"/>
</dbReference>
<dbReference type="CDD" id="cd00619">
    <property type="entry name" value="Terminator_NusB"/>
    <property type="match status" value="1"/>
</dbReference>
<dbReference type="Gene3D" id="1.10.940.10">
    <property type="entry name" value="NusB-like"/>
    <property type="match status" value="1"/>
</dbReference>
<dbReference type="HAMAP" id="MF_00073">
    <property type="entry name" value="NusB"/>
    <property type="match status" value="1"/>
</dbReference>
<dbReference type="InterPro" id="IPR035926">
    <property type="entry name" value="NusB-like_sf"/>
</dbReference>
<dbReference type="InterPro" id="IPR011605">
    <property type="entry name" value="NusB_fam"/>
</dbReference>
<dbReference type="InterPro" id="IPR006027">
    <property type="entry name" value="NusB_RsmB_TIM44"/>
</dbReference>
<dbReference type="NCBIfam" id="TIGR01951">
    <property type="entry name" value="nusB"/>
    <property type="match status" value="1"/>
</dbReference>
<dbReference type="NCBIfam" id="NF001230">
    <property type="entry name" value="PRK00202.2-5"/>
    <property type="match status" value="1"/>
</dbReference>
<dbReference type="Pfam" id="PF01029">
    <property type="entry name" value="NusB"/>
    <property type="match status" value="1"/>
</dbReference>
<dbReference type="SUPFAM" id="SSF48013">
    <property type="entry name" value="NusB-like"/>
    <property type="match status" value="1"/>
</dbReference>
<sequence length="160" mass="17874">MATLSPEKFSGSPISISKEFPQQKMREIILQMLYALDMAPSAEDSLVPLLMSQTAVSQKHVLVALNQTKSILEKSQELDLIIGNALKNKSFDSLDLVEKNVLRLTLFEHFYSPPINKAILIAEAIRLVKKFSYSEACPFIQAILNDIFTDSSLNENSLSI</sequence>
<name>NUSB_CHLPN</name>
<comment type="function">
    <text evidence="1">Involved in transcription antitermination. Required for transcription of ribosomal RNA (rRNA) genes. Binds specifically to the boxA antiterminator sequence of the ribosomal RNA (rrn) operons.</text>
</comment>
<comment type="similarity">
    <text evidence="1 2">Belongs to the NusB family.</text>
</comment>
<comment type="sequence caution" evidence="2">
    <conflict type="erroneous initiation">
        <sequence resource="EMBL-CDS" id="AAF38655"/>
    </conflict>
</comment>
<comment type="sequence caution" evidence="2">
    <conflict type="erroneous initiation">
        <sequence resource="EMBL-CDS" id="AAP98955"/>
    </conflict>
</comment>
<reference key="1">
    <citation type="journal article" date="1999" name="Nat. Genet.">
        <title>Comparative genomes of Chlamydia pneumoniae and C. trachomatis.</title>
        <authorList>
            <person name="Kalman S."/>
            <person name="Mitchell W.P."/>
            <person name="Marathe R."/>
            <person name="Lammel C.J."/>
            <person name="Fan J."/>
            <person name="Hyman R.W."/>
            <person name="Olinger L."/>
            <person name="Grimwood J."/>
            <person name="Davis R.W."/>
            <person name="Stephens R.S."/>
        </authorList>
    </citation>
    <scope>NUCLEOTIDE SEQUENCE [LARGE SCALE GENOMIC DNA]</scope>
    <source>
        <strain>CWL029</strain>
    </source>
</reference>
<reference key="2">
    <citation type="journal article" date="2000" name="Nucleic Acids Res.">
        <title>Genome sequences of Chlamydia trachomatis MoPn and Chlamydia pneumoniae AR39.</title>
        <authorList>
            <person name="Read T.D."/>
            <person name="Brunham R.C."/>
            <person name="Shen C."/>
            <person name="Gill S.R."/>
            <person name="Heidelberg J.F."/>
            <person name="White O."/>
            <person name="Hickey E.K."/>
            <person name="Peterson J.D."/>
            <person name="Utterback T.R."/>
            <person name="Berry K.J."/>
            <person name="Bass S."/>
            <person name="Linher K.D."/>
            <person name="Weidman J.F."/>
            <person name="Khouri H.M."/>
            <person name="Craven B."/>
            <person name="Bowman C."/>
            <person name="Dodson R.J."/>
            <person name="Gwinn M.L."/>
            <person name="Nelson W.C."/>
            <person name="DeBoy R.T."/>
            <person name="Kolonay J.F."/>
            <person name="McClarty G."/>
            <person name="Salzberg S.L."/>
            <person name="Eisen J.A."/>
            <person name="Fraser C.M."/>
        </authorList>
    </citation>
    <scope>NUCLEOTIDE SEQUENCE [LARGE SCALE GENOMIC DNA]</scope>
    <source>
        <strain>AR39</strain>
    </source>
</reference>
<reference key="3">
    <citation type="journal article" date="2000" name="Nucleic Acids Res.">
        <title>Comparison of whole genome sequences of Chlamydia pneumoniae J138 from Japan and CWL029 from USA.</title>
        <authorList>
            <person name="Shirai M."/>
            <person name="Hirakawa H."/>
            <person name="Kimoto M."/>
            <person name="Tabuchi M."/>
            <person name="Kishi F."/>
            <person name="Ouchi K."/>
            <person name="Shiba T."/>
            <person name="Ishii K."/>
            <person name="Hattori M."/>
            <person name="Kuhara S."/>
            <person name="Nakazawa T."/>
        </authorList>
    </citation>
    <scope>NUCLEOTIDE SEQUENCE [LARGE SCALE GENOMIC DNA]</scope>
    <source>
        <strain>J138</strain>
    </source>
</reference>
<reference key="4">
    <citation type="submission" date="2002-05" db="EMBL/GenBank/DDBJ databases">
        <title>The genome sequence of Chlamydia pneumoniae TW183 and comparison with other Chlamydia strains based on whole genome sequence analysis.</title>
        <authorList>
            <person name="Geng M.M."/>
            <person name="Schuhmacher A."/>
            <person name="Muehldorfer I."/>
            <person name="Bensch K.W."/>
            <person name="Schaefer K.P."/>
            <person name="Schneider S."/>
            <person name="Pohl T."/>
            <person name="Essig A."/>
            <person name="Marre R."/>
            <person name="Melchers K."/>
        </authorList>
    </citation>
    <scope>NUCLEOTIDE SEQUENCE [LARGE SCALE GENOMIC DNA]</scope>
    <source>
        <strain>TW-183</strain>
    </source>
</reference>
<feature type="chain" id="PRO_0000176525" description="Transcription antitermination protein NusB">
    <location>
        <begin position="1"/>
        <end position="160"/>
    </location>
</feature>
<gene>
    <name evidence="1" type="primary">nusB</name>
    <name type="ordered locus">CPn_0989</name>
    <name type="ordered locus">CP_0866</name>
    <name type="ordered locus">CPj0989</name>
    <name type="ordered locus">CpB1026</name>
</gene>
<evidence type="ECO:0000255" key="1">
    <source>
        <dbReference type="HAMAP-Rule" id="MF_00073"/>
    </source>
</evidence>
<evidence type="ECO:0000305" key="2"/>
<protein>
    <recommendedName>
        <fullName evidence="1">Transcription antitermination protein NusB</fullName>
    </recommendedName>
    <alternativeName>
        <fullName evidence="1">Antitermination factor NusB</fullName>
    </alternativeName>
</protein>
<proteinExistence type="inferred from homology"/>
<keyword id="KW-0694">RNA-binding</keyword>
<keyword id="KW-0804">Transcription</keyword>
<keyword id="KW-0889">Transcription antitermination</keyword>
<keyword id="KW-0805">Transcription regulation</keyword>
<accession>Q9Z6S0</accession>
<accession>Q9JQD6</accession>
<accession>Q9K1W6</accession>
<organism>
    <name type="scientific">Chlamydia pneumoniae</name>
    <name type="common">Chlamydophila pneumoniae</name>
    <dbReference type="NCBI Taxonomy" id="83558"/>
    <lineage>
        <taxon>Bacteria</taxon>
        <taxon>Pseudomonadati</taxon>
        <taxon>Chlamydiota</taxon>
        <taxon>Chlamydiia</taxon>
        <taxon>Chlamydiales</taxon>
        <taxon>Chlamydiaceae</taxon>
        <taxon>Chlamydia/Chlamydophila group</taxon>
        <taxon>Chlamydia</taxon>
    </lineage>
</organism>